<protein>
    <recommendedName>
        <fullName evidence="1">UDP-N-acetylglucosamine--N-acetylmuramyl-(pentapeptide) pyrophosphoryl-undecaprenol N-acetylglucosamine transferase</fullName>
        <ecNumber evidence="1">2.4.1.227</ecNumber>
    </recommendedName>
    <alternativeName>
        <fullName evidence="1">Undecaprenyl-PP-MurNAc-pentapeptide-UDPGlcNAc GlcNAc transferase</fullName>
    </alternativeName>
</protein>
<gene>
    <name evidence="1" type="primary">murG</name>
    <name type="ordered locus">Gmet_0412</name>
</gene>
<keyword id="KW-0131">Cell cycle</keyword>
<keyword id="KW-0132">Cell division</keyword>
<keyword id="KW-0997">Cell inner membrane</keyword>
<keyword id="KW-1003">Cell membrane</keyword>
<keyword id="KW-0133">Cell shape</keyword>
<keyword id="KW-0961">Cell wall biogenesis/degradation</keyword>
<keyword id="KW-0328">Glycosyltransferase</keyword>
<keyword id="KW-0472">Membrane</keyword>
<keyword id="KW-0573">Peptidoglycan synthesis</keyword>
<keyword id="KW-1185">Reference proteome</keyword>
<keyword id="KW-0808">Transferase</keyword>
<feature type="chain" id="PRO_1000002651" description="UDP-N-acetylglucosamine--N-acetylmuramyl-(pentapeptide) pyrophosphoryl-undecaprenol N-acetylglucosamine transferase">
    <location>
        <begin position="1"/>
        <end position="364"/>
    </location>
</feature>
<feature type="binding site" evidence="1">
    <location>
        <begin position="10"/>
        <end position="12"/>
    </location>
    <ligand>
        <name>UDP-N-acetyl-alpha-D-glucosamine</name>
        <dbReference type="ChEBI" id="CHEBI:57705"/>
    </ligand>
</feature>
<feature type="binding site" evidence="1">
    <location>
        <position position="124"/>
    </location>
    <ligand>
        <name>UDP-N-acetyl-alpha-D-glucosamine</name>
        <dbReference type="ChEBI" id="CHEBI:57705"/>
    </ligand>
</feature>
<feature type="binding site" evidence="1">
    <location>
        <position position="165"/>
    </location>
    <ligand>
        <name>UDP-N-acetyl-alpha-D-glucosamine</name>
        <dbReference type="ChEBI" id="CHEBI:57705"/>
    </ligand>
</feature>
<feature type="binding site" evidence="1">
    <location>
        <position position="193"/>
    </location>
    <ligand>
        <name>UDP-N-acetyl-alpha-D-glucosamine</name>
        <dbReference type="ChEBI" id="CHEBI:57705"/>
    </ligand>
</feature>
<feature type="binding site" evidence="1">
    <location>
        <position position="248"/>
    </location>
    <ligand>
        <name>UDP-N-acetyl-alpha-D-glucosamine</name>
        <dbReference type="ChEBI" id="CHEBI:57705"/>
    </ligand>
</feature>
<feature type="binding site" evidence="1">
    <location>
        <position position="293"/>
    </location>
    <ligand>
        <name>UDP-N-acetyl-alpha-D-glucosamine</name>
        <dbReference type="ChEBI" id="CHEBI:57705"/>
    </ligand>
</feature>
<sequence length="364" mass="39781">MRLLIAGGGTGGHLFPGIAVAEEFLSRKKGNEVLFVGTWRGIEARVLPKLGYRLECITAAGIRGKGSVARAKGLAKFLYGYAQSRKILKEFKPDLVLGVGGYASAPALLAARGMHIPRFIHEQNAIPGFTNKMLATVAERVFISLEESRKFFPEERTLLTGNPLRRQILEQVALAPQEERTDDAFHLLVFGGSAGAHRINLIMGEVLPHLEDVKERLRITHQTGENDLEDVTSAYEEQGVAADVVAFIDSMADAYRWADLVVCRAGATTIAEITACGKPCIFIPYPHAVDDHQRRNAEALLKRGAGFVIIEQELSGEVLAKTIRDLMADPARLKSVGEAAQGLARLDAAQVIVDEMMTSKRKEK</sequence>
<name>MURG_GEOMG</name>
<evidence type="ECO:0000255" key="1">
    <source>
        <dbReference type="HAMAP-Rule" id="MF_00033"/>
    </source>
</evidence>
<organism>
    <name type="scientific">Geobacter metallireducens (strain ATCC 53774 / DSM 7210 / GS-15)</name>
    <dbReference type="NCBI Taxonomy" id="269799"/>
    <lineage>
        <taxon>Bacteria</taxon>
        <taxon>Pseudomonadati</taxon>
        <taxon>Thermodesulfobacteriota</taxon>
        <taxon>Desulfuromonadia</taxon>
        <taxon>Geobacterales</taxon>
        <taxon>Geobacteraceae</taxon>
        <taxon>Geobacter</taxon>
    </lineage>
</organism>
<accession>Q39YL9</accession>
<reference key="1">
    <citation type="journal article" date="2009" name="BMC Microbiol.">
        <title>The genome sequence of Geobacter metallireducens: features of metabolism, physiology and regulation common and dissimilar to Geobacter sulfurreducens.</title>
        <authorList>
            <person name="Aklujkar M."/>
            <person name="Krushkal J."/>
            <person name="DiBartolo G."/>
            <person name="Lapidus A."/>
            <person name="Land M.L."/>
            <person name="Lovley D.R."/>
        </authorList>
    </citation>
    <scope>NUCLEOTIDE SEQUENCE [LARGE SCALE GENOMIC DNA]</scope>
    <source>
        <strain>ATCC 53774 / DSM 7210 / GS-15</strain>
    </source>
</reference>
<comment type="function">
    <text evidence="1">Cell wall formation. Catalyzes the transfer of a GlcNAc subunit on undecaprenyl-pyrophosphoryl-MurNAc-pentapeptide (lipid intermediate I) to form undecaprenyl-pyrophosphoryl-MurNAc-(pentapeptide)GlcNAc (lipid intermediate II).</text>
</comment>
<comment type="catalytic activity">
    <reaction evidence="1">
        <text>di-trans,octa-cis-undecaprenyl diphospho-N-acetyl-alpha-D-muramoyl-L-alanyl-D-glutamyl-meso-2,6-diaminopimeloyl-D-alanyl-D-alanine + UDP-N-acetyl-alpha-D-glucosamine = di-trans,octa-cis-undecaprenyl diphospho-[N-acetyl-alpha-D-glucosaminyl-(1-&gt;4)]-N-acetyl-alpha-D-muramoyl-L-alanyl-D-glutamyl-meso-2,6-diaminopimeloyl-D-alanyl-D-alanine + UDP + H(+)</text>
        <dbReference type="Rhea" id="RHEA:31227"/>
        <dbReference type="ChEBI" id="CHEBI:15378"/>
        <dbReference type="ChEBI" id="CHEBI:57705"/>
        <dbReference type="ChEBI" id="CHEBI:58223"/>
        <dbReference type="ChEBI" id="CHEBI:61387"/>
        <dbReference type="ChEBI" id="CHEBI:61388"/>
        <dbReference type="EC" id="2.4.1.227"/>
    </reaction>
</comment>
<comment type="pathway">
    <text evidence="1">Cell wall biogenesis; peptidoglycan biosynthesis.</text>
</comment>
<comment type="subcellular location">
    <subcellularLocation>
        <location evidence="1">Cell inner membrane</location>
        <topology evidence="1">Peripheral membrane protein</topology>
        <orientation evidence="1">Cytoplasmic side</orientation>
    </subcellularLocation>
</comment>
<comment type="similarity">
    <text evidence="1">Belongs to the glycosyltransferase 28 family. MurG subfamily.</text>
</comment>
<proteinExistence type="inferred from homology"/>
<dbReference type="EC" id="2.4.1.227" evidence="1"/>
<dbReference type="EMBL" id="CP000148">
    <property type="protein sequence ID" value="ABB30655.1"/>
    <property type="molecule type" value="Genomic_DNA"/>
</dbReference>
<dbReference type="RefSeq" id="WP_004512384.1">
    <property type="nucleotide sequence ID" value="NC_007517.1"/>
</dbReference>
<dbReference type="SMR" id="Q39YL9"/>
<dbReference type="STRING" id="269799.Gmet_0412"/>
<dbReference type="CAZy" id="GT28">
    <property type="family name" value="Glycosyltransferase Family 28"/>
</dbReference>
<dbReference type="KEGG" id="gme:Gmet_0412"/>
<dbReference type="eggNOG" id="COG0707">
    <property type="taxonomic scope" value="Bacteria"/>
</dbReference>
<dbReference type="HOGENOM" id="CLU_037404_2_0_7"/>
<dbReference type="UniPathway" id="UPA00219"/>
<dbReference type="Proteomes" id="UP000007073">
    <property type="component" value="Chromosome"/>
</dbReference>
<dbReference type="GO" id="GO:0005886">
    <property type="term" value="C:plasma membrane"/>
    <property type="evidence" value="ECO:0007669"/>
    <property type="project" value="UniProtKB-SubCell"/>
</dbReference>
<dbReference type="GO" id="GO:0051991">
    <property type="term" value="F:UDP-N-acetyl-D-glucosamine:N-acetylmuramoyl-L-alanyl-D-glutamyl-meso-2,6-diaminopimelyl-D-alanyl-D-alanine-diphosphoundecaprenol 4-beta-N-acetylglucosaminlytransferase activity"/>
    <property type="evidence" value="ECO:0007669"/>
    <property type="project" value="RHEA"/>
</dbReference>
<dbReference type="GO" id="GO:0050511">
    <property type="term" value="F:undecaprenyldiphospho-muramoylpentapeptide beta-N-acetylglucosaminyltransferase activity"/>
    <property type="evidence" value="ECO:0007669"/>
    <property type="project" value="UniProtKB-UniRule"/>
</dbReference>
<dbReference type="GO" id="GO:0005975">
    <property type="term" value="P:carbohydrate metabolic process"/>
    <property type="evidence" value="ECO:0007669"/>
    <property type="project" value="InterPro"/>
</dbReference>
<dbReference type="GO" id="GO:0051301">
    <property type="term" value="P:cell division"/>
    <property type="evidence" value="ECO:0007669"/>
    <property type="project" value="UniProtKB-KW"/>
</dbReference>
<dbReference type="GO" id="GO:0071555">
    <property type="term" value="P:cell wall organization"/>
    <property type="evidence" value="ECO:0007669"/>
    <property type="project" value="UniProtKB-KW"/>
</dbReference>
<dbReference type="GO" id="GO:0030259">
    <property type="term" value="P:lipid glycosylation"/>
    <property type="evidence" value="ECO:0007669"/>
    <property type="project" value="UniProtKB-UniRule"/>
</dbReference>
<dbReference type="GO" id="GO:0009252">
    <property type="term" value="P:peptidoglycan biosynthetic process"/>
    <property type="evidence" value="ECO:0007669"/>
    <property type="project" value="UniProtKB-UniRule"/>
</dbReference>
<dbReference type="GO" id="GO:0008360">
    <property type="term" value="P:regulation of cell shape"/>
    <property type="evidence" value="ECO:0007669"/>
    <property type="project" value="UniProtKB-KW"/>
</dbReference>
<dbReference type="CDD" id="cd03785">
    <property type="entry name" value="GT28_MurG"/>
    <property type="match status" value="1"/>
</dbReference>
<dbReference type="Gene3D" id="3.40.50.2000">
    <property type="entry name" value="Glycogen Phosphorylase B"/>
    <property type="match status" value="2"/>
</dbReference>
<dbReference type="HAMAP" id="MF_00033">
    <property type="entry name" value="MurG"/>
    <property type="match status" value="1"/>
</dbReference>
<dbReference type="InterPro" id="IPR006009">
    <property type="entry name" value="GlcNAc_MurG"/>
</dbReference>
<dbReference type="InterPro" id="IPR007235">
    <property type="entry name" value="Glyco_trans_28_C"/>
</dbReference>
<dbReference type="InterPro" id="IPR004276">
    <property type="entry name" value="GlycoTrans_28_N"/>
</dbReference>
<dbReference type="NCBIfam" id="TIGR01133">
    <property type="entry name" value="murG"/>
    <property type="match status" value="1"/>
</dbReference>
<dbReference type="PANTHER" id="PTHR21015:SF22">
    <property type="entry name" value="GLYCOSYLTRANSFERASE"/>
    <property type="match status" value="1"/>
</dbReference>
<dbReference type="PANTHER" id="PTHR21015">
    <property type="entry name" value="UDP-N-ACETYLGLUCOSAMINE--N-ACETYLMURAMYL-(PENTAPEPTIDE) PYROPHOSPHORYL-UNDECAPRENOL N-ACETYLGLUCOSAMINE TRANSFERASE 1"/>
    <property type="match status" value="1"/>
</dbReference>
<dbReference type="Pfam" id="PF04101">
    <property type="entry name" value="Glyco_tran_28_C"/>
    <property type="match status" value="1"/>
</dbReference>
<dbReference type="Pfam" id="PF03033">
    <property type="entry name" value="Glyco_transf_28"/>
    <property type="match status" value="1"/>
</dbReference>
<dbReference type="SUPFAM" id="SSF53756">
    <property type="entry name" value="UDP-Glycosyltransferase/glycogen phosphorylase"/>
    <property type="match status" value="1"/>
</dbReference>